<comment type="function">
    <text evidence="1">Stimulates cellular proliferation (hyperplasia)and mobility around infected cells to promote rapid and efficient spread of infection. This effect is beneficial for virus replication in vivo, because poxviruses replicate possibly better in proliferating cells than in quiescent cells. Acts by binding host EGFR, inducing its dimerization, autophosphorylation and leading to activation of several cellular pathways regulating cell proliferation or cell survival. The activation by host EGFR of mitogen activated protein kinases (MAPK) and extracellular-signal regulated kinases (ERK) are essential for the positive effect of vaccinia growth factor on poxvirus virulence in vivo.</text>
</comment>
<comment type="subunit">
    <text evidence="1">Variola growth factor interacts with host EGFR and promotes EGFR dimerization.</text>
</comment>
<comment type="subcellular location">
    <molecule>Pro-variola growth factor</molecule>
    <subcellularLocation>
        <location evidence="1">Host membrane</location>
    </subcellularLocation>
</comment>
<comment type="subcellular location">
    <molecule>Variola growth factor</molecule>
    <subcellularLocation>
        <location evidence="1">Secreted</location>
    </subcellularLocation>
</comment>
<comment type="induction">
    <text evidence="1">Expressed in the early phase of the viral replicative cycle.</text>
</comment>
<comment type="similarity">
    <text evidence="4">Belongs to the orthopoxvirus OPG019 family.</text>
</comment>
<evidence type="ECO:0000250" key="1">
    <source>
        <dbReference type="UniProtKB" id="P01136"/>
    </source>
</evidence>
<evidence type="ECO:0000255" key="2"/>
<evidence type="ECO:0000255" key="3">
    <source>
        <dbReference type="PROSITE-ProRule" id="PRU00076"/>
    </source>
</evidence>
<evidence type="ECO:0000305" key="4"/>
<proteinExistence type="inferred from homology"/>
<organism>
    <name type="scientific">Variola virus</name>
    <dbReference type="NCBI Taxonomy" id="10255"/>
    <lineage>
        <taxon>Viruses</taxon>
        <taxon>Varidnaviria</taxon>
        <taxon>Bamfordvirae</taxon>
        <taxon>Nucleocytoviricota</taxon>
        <taxon>Pokkesviricetes</taxon>
        <taxon>Chitovirales</taxon>
        <taxon>Poxviridae</taxon>
        <taxon>Chordopoxvirinae</taxon>
        <taxon>Orthopoxvirus</taxon>
    </lineage>
</organism>
<reference key="1">
    <citation type="journal article" date="1993" name="Nature">
        <title>Potential virulence determinants in terminal regions of variola smallpox virus genome.</title>
        <authorList>
            <person name="Massung R.F."/>
            <person name="Esposito J.J."/>
            <person name="Liu L.I."/>
            <person name="Qi J."/>
            <person name="Utterback T.R."/>
            <person name="Knight J.C."/>
            <person name="Aubin L."/>
            <person name="Yuran T.E."/>
            <person name="Parsons J.M."/>
            <person name="Loparev V.N."/>
            <person name="Selivanov N.A."/>
            <person name="Cavallaro K.F."/>
            <person name="Kerlavage A.R."/>
            <person name="Mahy B.W.J."/>
            <person name="Venter J.C."/>
        </authorList>
    </citation>
    <scope>NUCLEOTIDE SEQUENCE [GENOMIC DNA]</scope>
    <source>
        <strain>Bangladesh-1975</strain>
    </source>
</reference>
<reference key="2">
    <citation type="journal article" date="1996" name="Virology">
        <title>Terminal region sequence variations in variola virus DNA.</title>
        <authorList>
            <person name="Massung R.F."/>
            <person name="Loparev V.N."/>
            <person name="Knight J.C."/>
            <person name="Totmenin A.V."/>
            <person name="Chizhikov V.E."/>
            <person name="Parsons J.M."/>
            <person name="Safronov P.F."/>
            <person name="Gutorov V.V."/>
            <person name="Shchelkunov S.N."/>
            <person name="Esposito J.J."/>
        </authorList>
    </citation>
    <scope>NUCLEOTIDE SEQUENCE [GENOMIC DNA]</scope>
    <source>
        <strain>Congo-1965</strain>
        <strain>Garcia-1966</strain>
        <strain>Somalia-1977</strain>
    </source>
</reference>
<reference key="3">
    <citation type="journal article" date="2000" name="Virology">
        <title>Alastrim smallpox variola minor virus genome DNA sequences.</title>
        <authorList>
            <person name="Shchelkunov S.N."/>
            <person name="Totmenin A.V."/>
            <person name="Loparev V.N."/>
            <person name="Safronov P.F."/>
            <person name="Gutorov V.V."/>
            <person name="Chizhikov V.E."/>
            <person name="Knight J.C."/>
            <person name="Parsons J.M."/>
            <person name="Massung R.F."/>
            <person name="Esposito J.J."/>
        </authorList>
    </citation>
    <scope>NUCLEOTIDE SEQUENCE [LARGE SCALE GENOMIC DNA]</scope>
    <source>
        <strain>Garcia-1966</strain>
    </source>
</reference>
<name>VGF_VARV</name>
<sequence>MSMKYLMLLFAAMIIRSFANSGNAIETTLSEITNTTTDIPAIRLCGPEGNGYCFHGICIHARDIDGMYCRCSHGYTGIRCQHVVLVDYQRSEKPNTTTSYIPSPGIVLVLLVSIIMCCLLFVYRFTRRTNKLPLQDMVVP</sequence>
<gene>
    <name type="primary">OPG019</name>
    <name type="ORF">B3R</name>
    <name type="ORF">B4R</name>
    <name type="ORF">C11R</name>
    <name type="ORF">D2L</name>
    <name type="ORF">D4R</name>
</gene>
<accession>P0DOQ0</accession>
<accession>P33804</accession>
<accession>Q76Q77</accession>
<accession>Q76UB3</accession>
<accession>Q89066</accession>
<accession>Q89756</accession>
<dbReference type="EMBL" id="L22579">
    <property type="protein sequence ID" value="AAA60749.1"/>
    <property type="molecule type" value="Genomic_DNA"/>
</dbReference>
<dbReference type="EMBL" id="U18337">
    <property type="protein sequence ID" value="AAA69306.1"/>
    <property type="molecule type" value="Genomic_DNA"/>
</dbReference>
<dbReference type="EMBL" id="U18338">
    <property type="protein sequence ID" value="AAA69343.1"/>
    <property type="molecule type" value="Genomic_DNA"/>
</dbReference>
<dbReference type="EMBL" id="U18340">
    <property type="protein sequence ID" value="AAA69412.1"/>
    <property type="molecule type" value="Genomic_DNA"/>
</dbReference>
<dbReference type="EMBL" id="Y16780">
    <property type="protein sequence ID" value="CAB54597.1"/>
    <property type="molecule type" value="Genomic_DNA"/>
</dbReference>
<dbReference type="PIR" id="C72150">
    <property type="entry name" value="C72150"/>
</dbReference>
<dbReference type="PIR" id="T28439">
    <property type="entry name" value="T28439"/>
</dbReference>
<dbReference type="SMR" id="P0DOQ0"/>
<dbReference type="Proteomes" id="UP000111493">
    <property type="component" value="Segment"/>
</dbReference>
<dbReference type="Proteomes" id="UP000119805">
    <property type="component" value="Segment"/>
</dbReference>
<dbReference type="GO" id="GO:0005576">
    <property type="term" value="C:extracellular region"/>
    <property type="evidence" value="ECO:0007669"/>
    <property type="project" value="UniProtKB-SubCell"/>
</dbReference>
<dbReference type="GO" id="GO:0033644">
    <property type="term" value="C:host cell membrane"/>
    <property type="evidence" value="ECO:0007669"/>
    <property type="project" value="UniProtKB-SubCell"/>
</dbReference>
<dbReference type="GO" id="GO:0016020">
    <property type="term" value="C:membrane"/>
    <property type="evidence" value="ECO:0007669"/>
    <property type="project" value="UniProtKB-KW"/>
</dbReference>
<dbReference type="GO" id="GO:0005154">
    <property type="term" value="F:epidermal growth factor receptor binding"/>
    <property type="evidence" value="ECO:0007669"/>
    <property type="project" value="InterPro"/>
</dbReference>
<dbReference type="GO" id="GO:0008083">
    <property type="term" value="F:growth factor activity"/>
    <property type="evidence" value="ECO:0007669"/>
    <property type="project" value="UniProtKB-KW"/>
</dbReference>
<dbReference type="GO" id="GO:0007173">
    <property type="term" value="P:epidermal growth factor receptor signaling pathway"/>
    <property type="evidence" value="ECO:0007669"/>
    <property type="project" value="TreeGrafter"/>
</dbReference>
<dbReference type="GO" id="GO:0008284">
    <property type="term" value="P:positive regulation of cell population proliferation"/>
    <property type="evidence" value="ECO:0007669"/>
    <property type="project" value="TreeGrafter"/>
</dbReference>
<dbReference type="GO" id="GO:0045840">
    <property type="term" value="P:positive regulation of mitotic nuclear division"/>
    <property type="evidence" value="ECO:0007669"/>
    <property type="project" value="TreeGrafter"/>
</dbReference>
<dbReference type="Gene3D" id="2.10.25.10">
    <property type="entry name" value="Laminin"/>
    <property type="match status" value="1"/>
</dbReference>
<dbReference type="InterPro" id="IPR000742">
    <property type="entry name" value="EGF-like_dom"/>
</dbReference>
<dbReference type="InterPro" id="IPR011170">
    <property type="entry name" value="GF_C11R"/>
</dbReference>
<dbReference type="PANTHER" id="PTHR10740:SF14">
    <property type="entry name" value="EGF-LIKE DOMAIN-CONTAINING PROTEIN"/>
    <property type="match status" value="1"/>
</dbReference>
<dbReference type="PANTHER" id="PTHR10740">
    <property type="entry name" value="TRANSFORMING GROWTH FACTOR ALPHA"/>
    <property type="match status" value="1"/>
</dbReference>
<dbReference type="PIRSF" id="PIRSF001779">
    <property type="entry name" value="GF_C11R"/>
    <property type="match status" value="1"/>
</dbReference>
<dbReference type="PRINTS" id="PR00009">
    <property type="entry name" value="EGFTGF"/>
</dbReference>
<dbReference type="SUPFAM" id="SSF57196">
    <property type="entry name" value="EGF/Laminin"/>
    <property type="match status" value="1"/>
</dbReference>
<dbReference type="PROSITE" id="PS00022">
    <property type="entry name" value="EGF_1"/>
    <property type="match status" value="1"/>
</dbReference>
<dbReference type="PROSITE" id="PS01186">
    <property type="entry name" value="EGF_2"/>
    <property type="match status" value="1"/>
</dbReference>
<dbReference type="PROSITE" id="PS50026">
    <property type="entry name" value="EGF_3"/>
    <property type="match status" value="1"/>
</dbReference>
<feature type="signal peptide" evidence="2">
    <location>
        <begin position="1"/>
        <end position="18"/>
    </location>
</feature>
<feature type="chain" id="PRO_0000448105" description="Pro-variola growth factor">
    <location>
        <begin position="19"/>
        <end position="140"/>
    </location>
</feature>
<feature type="chain" id="PRO_0000448106" description="Variola growth factor" evidence="2">
    <location>
        <begin position="19"/>
        <end position="96"/>
    </location>
</feature>
<feature type="topological domain" description="Extracellular" evidence="2">
    <location>
        <begin position="19"/>
        <end position="100"/>
    </location>
</feature>
<feature type="transmembrane region" description="Helical" evidence="2">
    <location>
        <begin position="101"/>
        <end position="121"/>
    </location>
</feature>
<feature type="topological domain" description="Cytoplasmic" evidence="2">
    <location>
        <begin position="122"/>
        <end position="140"/>
    </location>
</feature>
<feature type="domain" description="EGF-like" evidence="3">
    <location>
        <begin position="41"/>
        <end position="81"/>
    </location>
</feature>
<feature type="site" description="Cleavage (By host protease)" evidence="2">
    <location>
        <begin position="96"/>
        <end position="97"/>
    </location>
</feature>
<feature type="glycosylation site" description="N-linked (GlcNAc...) asparagine; by host" evidence="2">
    <location>
        <position position="34"/>
    </location>
</feature>
<feature type="glycosylation site" description="N-linked (GlcNAc...) asparagine; by host" evidence="2">
    <location>
        <position position="95"/>
    </location>
</feature>
<feature type="disulfide bond" evidence="3">
    <location>
        <begin position="45"/>
        <end position="58"/>
    </location>
</feature>
<feature type="disulfide bond" evidence="3">
    <location>
        <begin position="53"/>
        <end position="69"/>
    </location>
</feature>
<feature type="disulfide bond" evidence="3">
    <location>
        <begin position="71"/>
        <end position="80"/>
    </location>
</feature>
<feature type="sequence variant" description="In strain: Garcia-1966.">
    <original>S</original>
    <variation>G</variation>
    <location>
        <position position="113"/>
    </location>
</feature>
<organismHost>
    <name type="scientific">Homo sapiens</name>
    <name type="common">Human</name>
    <dbReference type="NCBI Taxonomy" id="9606"/>
</organismHost>
<keyword id="KW-1015">Disulfide bond</keyword>
<keyword id="KW-0244">Early protein</keyword>
<keyword id="KW-0245">EGF-like domain</keyword>
<keyword id="KW-0325">Glycoprotein</keyword>
<keyword id="KW-0339">Growth factor</keyword>
<keyword id="KW-1043">Host membrane</keyword>
<keyword id="KW-0945">Host-virus interaction</keyword>
<keyword id="KW-0472">Membrane</keyword>
<keyword id="KW-0964">Secreted</keyword>
<keyword id="KW-0732">Signal</keyword>
<keyword id="KW-0812">Transmembrane</keyword>
<keyword id="KW-1133">Transmembrane helix</keyword>
<protein>
    <recommendedName>
        <fullName>Pro-variola growth factor</fullName>
        <shortName>Pro-VGF</shortName>
    </recommendedName>
    <component>
        <recommendedName>
            <fullName>Variola growth factor</fullName>
            <shortName>VGF</shortName>
        </recommendedName>
        <alternativeName>
            <fullName>Secreted epidermal growth factor-like</fullName>
        </alternativeName>
    </component>
</protein>